<accession>Q66HC4</accession>
<keyword id="KW-0378">Hydrolase</keyword>
<keyword id="KW-0460">Magnesium</keyword>
<keyword id="KW-0479">Metal-binding</keyword>
<keyword id="KW-0663">Pyridoxal phosphate</keyword>
<keyword id="KW-1185">Reference proteome</keyword>
<name>PHOP2_RAT</name>
<protein>
    <recommendedName>
        <fullName>Pyridoxal phosphate phosphatase PHOSPHO2</fullName>
        <ecNumber evidence="1">3.1.3.74</ecNumber>
    </recommendedName>
</protein>
<comment type="function">
    <text evidence="1">Phosphatase that has high activity toward pyridoxal 5'-phosphate (PLP). Also active at much lower level toward pyrophosphate, phosphoethanolamine (PEA), phosphocholine (PCho), phospho-l-tyrosine, fructose-6-phosphate, p-nitrophenyl phosphate, and h-glycerophosphate.</text>
</comment>
<comment type="catalytic activity">
    <reaction evidence="1">
        <text>pyridoxal 5'-phosphate + H2O = pyridoxal + phosphate</text>
        <dbReference type="Rhea" id="RHEA:20533"/>
        <dbReference type="ChEBI" id="CHEBI:15377"/>
        <dbReference type="ChEBI" id="CHEBI:17310"/>
        <dbReference type="ChEBI" id="CHEBI:43474"/>
        <dbReference type="ChEBI" id="CHEBI:597326"/>
        <dbReference type="EC" id="3.1.3.74"/>
    </reaction>
</comment>
<comment type="cofactor">
    <cofactor evidence="2">
        <name>Mg(2+)</name>
        <dbReference type="ChEBI" id="CHEBI:18420"/>
    </cofactor>
</comment>
<comment type="similarity">
    <text evidence="4">Belongs to the HAD-like hydrolase superfamily. PHOSPHO family.</text>
</comment>
<dbReference type="EC" id="3.1.3.74" evidence="1"/>
<dbReference type="EMBL" id="BC081926">
    <property type="protein sequence ID" value="AAH81926.1"/>
    <property type="molecule type" value="mRNA"/>
</dbReference>
<dbReference type="RefSeq" id="NP_001007643.1">
    <property type="nucleotide sequence ID" value="NM_001007642.1"/>
</dbReference>
<dbReference type="SMR" id="Q66HC4"/>
<dbReference type="FunCoup" id="Q66HC4">
    <property type="interactions" value="2091"/>
</dbReference>
<dbReference type="STRING" id="10116.ENSRNOP00000010489"/>
<dbReference type="PhosphoSitePlus" id="Q66HC4"/>
<dbReference type="PaxDb" id="10116-ENSRNOP00000010489"/>
<dbReference type="DNASU" id="295663"/>
<dbReference type="Ensembl" id="ENSRNOT00000010489.5">
    <property type="protein sequence ID" value="ENSRNOP00000010489.3"/>
    <property type="gene ID" value="ENSRNOG00000007979.5"/>
</dbReference>
<dbReference type="Ensembl" id="ENSRNOT00000106872.1">
    <property type="protein sequence ID" value="ENSRNOP00000088734.1"/>
    <property type="gene ID" value="ENSRNOG00000007979.5"/>
</dbReference>
<dbReference type="Ensembl" id="ENSRNOT00000112246.1">
    <property type="protein sequence ID" value="ENSRNOP00000090811.1"/>
    <property type="gene ID" value="ENSRNOG00000007979.5"/>
</dbReference>
<dbReference type="GeneID" id="295663"/>
<dbReference type="KEGG" id="rno:295663"/>
<dbReference type="UCSC" id="RGD:1359274">
    <property type="organism name" value="rat"/>
</dbReference>
<dbReference type="AGR" id="RGD:1359274"/>
<dbReference type="CTD" id="493911"/>
<dbReference type="RGD" id="1359274">
    <property type="gene designation" value="Phospho2"/>
</dbReference>
<dbReference type="eggNOG" id="KOG3120">
    <property type="taxonomic scope" value="Eukaryota"/>
</dbReference>
<dbReference type="GeneTree" id="ENSGT00390000007741"/>
<dbReference type="HOGENOM" id="CLU_068983_0_1_1"/>
<dbReference type="InParanoid" id="Q66HC4"/>
<dbReference type="OMA" id="HNLADCF"/>
<dbReference type="OrthoDB" id="10267182at2759"/>
<dbReference type="PhylomeDB" id="Q66HC4"/>
<dbReference type="TreeFam" id="TF300112"/>
<dbReference type="PRO" id="PR:Q66HC4"/>
<dbReference type="Proteomes" id="UP000002494">
    <property type="component" value="Chromosome 3"/>
</dbReference>
<dbReference type="Bgee" id="ENSRNOG00000007979">
    <property type="expression patterns" value="Expressed in testis and 20 other cell types or tissues"/>
</dbReference>
<dbReference type="GO" id="GO:0046872">
    <property type="term" value="F:metal ion binding"/>
    <property type="evidence" value="ECO:0007669"/>
    <property type="project" value="UniProtKB-KW"/>
</dbReference>
<dbReference type="GO" id="GO:0016791">
    <property type="term" value="F:phosphatase activity"/>
    <property type="evidence" value="ECO:0000318"/>
    <property type="project" value="GO_Central"/>
</dbReference>
<dbReference type="GO" id="GO:0033883">
    <property type="term" value="F:pyridoxal phosphatase activity"/>
    <property type="evidence" value="ECO:0007669"/>
    <property type="project" value="UniProtKB-EC"/>
</dbReference>
<dbReference type="Gene3D" id="3.40.50.1000">
    <property type="entry name" value="HAD superfamily/HAD-like"/>
    <property type="match status" value="1"/>
</dbReference>
<dbReference type="InterPro" id="IPR036412">
    <property type="entry name" value="HAD-like_sf"/>
</dbReference>
<dbReference type="InterPro" id="IPR006384">
    <property type="entry name" value="HAD_hydro_PyrdxlP_Pase-like"/>
</dbReference>
<dbReference type="InterPro" id="IPR023214">
    <property type="entry name" value="HAD_sf"/>
</dbReference>
<dbReference type="InterPro" id="IPR016965">
    <property type="entry name" value="Pase_PHOSPHO-typ"/>
</dbReference>
<dbReference type="NCBIfam" id="TIGR01489">
    <property type="entry name" value="DKMTPPase-SF"/>
    <property type="match status" value="1"/>
</dbReference>
<dbReference type="NCBIfam" id="TIGR01488">
    <property type="entry name" value="HAD-SF-IB"/>
    <property type="match status" value="1"/>
</dbReference>
<dbReference type="PANTHER" id="PTHR20889">
    <property type="entry name" value="PHOSPHATASE, ORPHAN 1, 2"/>
    <property type="match status" value="1"/>
</dbReference>
<dbReference type="PANTHER" id="PTHR20889:SF1">
    <property type="entry name" value="PYRIDOXAL PHOSPHATE PHOSPHATASE PHOSPHO2"/>
    <property type="match status" value="1"/>
</dbReference>
<dbReference type="Pfam" id="PF06888">
    <property type="entry name" value="Put_Phosphatase"/>
    <property type="match status" value="1"/>
</dbReference>
<dbReference type="PIRSF" id="PIRSF031051">
    <property type="entry name" value="PyrdxlP_Pase_PHOSPHO2"/>
    <property type="match status" value="1"/>
</dbReference>
<dbReference type="SUPFAM" id="SSF56784">
    <property type="entry name" value="HAD-like"/>
    <property type="match status" value="1"/>
</dbReference>
<gene>
    <name type="primary">Phospho2</name>
</gene>
<evidence type="ECO:0000250" key="1">
    <source>
        <dbReference type="UniProtKB" id="Q8TCD6"/>
    </source>
</evidence>
<evidence type="ECO:0000250" key="2">
    <source>
        <dbReference type="UniProtKB" id="Q8TCT1"/>
    </source>
</evidence>
<evidence type="ECO:0000250" key="3">
    <source>
        <dbReference type="UniProtKB" id="Q96GD0"/>
    </source>
</evidence>
<evidence type="ECO:0000305" key="4"/>
<sequence length="241" mass="27627">MKVLLVFDFDNTIIDDNSDTWIIQCAPDKKLPIELQDSYQKGLWTEFMGRVFKYLRDEGVKEEELKRAVTSLPFTSGMIELLSFLRMNKDRFDCIIISDSNSIFIDWVLEAAAFHDVFDTVFTNPASFDSTGRLTVRNCHTHACTRCPKNLCKNTVLGEFIDKQLQKGVRYTRIVYIGDGGNDVCPVTFLKKNDVAMPREGYTLHRTLDKMSQNLEPMASSIVVWSSGMEIISHLQFLIQM</sequence>
<organism>
    <name type="scientific">Rattus norvegicus</name>
    <name type="common">Rat</name>
    <dbReference type="NCBI Taxonomy" id="10116"/>
    <lineage>
        <taxon>Eukaryota</taxon>
        <taxon>Metazoa</taxon>
        <taxon>Chordata</taxon>
        <taxon>Craniata</taxon>
        <taxon>Vertebrata</taxon>
        <taxon>Euteleostomi</taxon>
        <taxon>Mammalia</taxon>
        <taxon>Eutheria</taxon>
        <taxon>Euarchontoglires</taxon>
        <taxon>Glires</taxon>
        <taxon>Rodentia</taxon>
        <taxon>Myomorpha</taxon>
        <taxon>Muroidea</taxon>
        <taxon>Muridae</taxon>
        <taxon>Murinae</taxon>
        <taxon>Rattus</taxon>
    </lineage>
</organism>
<proteinExistence type="evidence at transcript level"/>
<reference key="1">
    <citation type="journal article" date="2004" name="Genome Res.">
        <title>The status, quality, and expansion of the NIH full-length cDNA project: the Mammalian Gene Collection (MGC).</title>
        <authorList>
            <consortium name="The MGC Project Team"/>
        </authorList>
    </citation>
    <scope>NUCLEOTIDE SEQUENCE [LARGE SCALE MRNA]</scope>
    <source>
        <tissue>Testis</tissue>
    </source>
</reference>
<feature type="chain" id="PRO_0000068835" description="Pyridoxal phosphate phosphatase PHOSPHO2">
    <location>
        <begin position="1"/>
        <end position="241"/>
    </location>
</feature>
<feature type="active site" description="Nucleophile" evidence="2">
    <location>
        <position position="8"/>
    </location>
</feature>
<feature type="active site" description="Proton donor" evidence="3">
    <location>
        <position position="10"/>
    </location>
</feature>
<feature type="binding site" evidence="3">
    <location>
        <position position="8"/>
    </location>
    <ligand>
        <name>Mg(2+)</name>
        <dbReference type="ChEBI" id="CHEBI:18420"/>
    </ligand>
</feature>
<feature type="binding site" evidence="3">
    <location>
        <position position="10"/>
    </location>
    <ligand>
        <name>Mg(2+)</name>
        <dbReference type="ChEBI" id="CHEBI:18420"/>
    </ligand>
</feature>
<feature type="binding site" evidence="2">
    <location>
        <position position="19"/>
    </location>
    <ligand>
        <name>substrate</name>
    </ligand>
</feature>
<feature type="binding site" evidence="2">
    <location>
        <position position="99"/>
    </location>
    <ligand>
        <name>substrate</name>
    </ligand>
</feature>
<feature type="binding site" evidence="3">
    <location>
        <position position="179"/>
    </location>
    <ligand>
        <name>Mg(2+)</name>
        <dbReference type="ChEBI" id="CHEBI:18420"/>
    </ligand>
</feature>